<comment type="function">
    <text evidence="1">Peptide chain release factor 1 directs the termination of translation in response to the peptide chain termination codons UAG and UAA.</text>
</comment>
<comment type="subcellular location">
    <subcellularLocation>
        <location evidence="1">Cytoplasm</location>
    </subcellularLocation>
</comment>
<comment type="PTM">
    <text evidence="1">Methylated by PrmC. Methylation increases the termination efficiency of RF1.</text>
</comment>
<comment type="similarity">
    <text evidence="1">Belongs to the prokaryotic/mitochondrial release factor family.</text>
</comment>
<name>RF1_RHORT</name>
<feature type="chain" id="PRO_0000263338" description="Peptide chain release factor 1">
    <location>
        <begin position="1"/>
        <end position="354"/>
    </location>
</feature>
<feature type="modified residue" description="N5-methylglutamine" evidence="1">
    <location>
        <position position="230"/>
    </location>
</feature>
<accession>Q2RWE1</accession>
<sequence>MSLEENLSRVVARHDELRALLSTSAGGGEGFVRMSRELADLAPVVEAIGRLDDAKAELAGARALLDDPDMRDLAREEVLRLEAEIPALEHGVKLLLLPRDEADDRGVILEVRAGTGGDEAALFAGDLLRMYERYAQERGWRFEVMEASDTDIGGIKEASAAISGRGVFARLKFESGVHRVQRVPVTEGGGRIHTSAATVAVLPEAEEVDVEIEEKDLRIDTYRSQGAGGQHVNTTDSAVRITHLPSGVVAQCQDEKSQHKNKAKAMRMLRTKLYDHARQTADDARAEARRVQVGSGDRSERIRTYNFPQGRVTDHRIGLTLHRLPEVLAGTALDEVIEPLIAEDQATRMAEIGG</sequence>
<proteinExistence type="inferred from homology"/>
<evidence type="ECO:0000255" key="1">
    <source>
        <dbReference type="HAMAP-Rule" id="MF_00093"/>
    </source>
</evidence>
<keyword id="KW-0963">Cytoplasm</keyword>
<keyword id="KW-0488">Methylation</keyword>
<keyword id="KW-0648">Protein biosynthesis</keyword>
<keyword id="KW-1185">Reference proteome</keyword>
<reference key="1">
    <citation type="journal article" date="2011" name="Stand. Genomic Sci.">
        <title>Complete genome sequence of Rhodospirillum rubrum type strain (S1).</title>
        <authorList>
            <person name="Munk A.C."/>
            <person name="Copeland A."/>
            <person name="Lucas S."/>
            <person name="Lapidus A."/>
            <person name="Del Rio T.G."/>
            <person name="Barry K."/>
            <person name="Detter J.C."/>
            <person name="Hammon N."/>
            <person name="Israni S."/>
            <person name="Pitluck S."/>
            <person name="Brettin T."/>
            <person name="Bruce D."/>
            <person name="Han C."/>
            <person name="Tapia R."/>
            <person name="Gilna P."/>
            <person name="Schmutz J."/>
            <person name="Larimer F."/>
            <person name="Land M."/>
            <person name="Kyrpides N.C."/>
            <person name="Mavromatis K."/>
            <person name="Richardson P."/>
            <person name="Rohde M."/>
            <person name="Goeker M."/>
            <person name="Klenk H.P."/>
            <person name="Zhang Y."/>
            <person name="Roberts G.P."/>
            <person name="Reslewic S."/>
            <person name="Schwartz D.C."/>
        </authorList>
    </citation>
    <scope>NUCLEOTIDE SEQUENCE [LARGE SCALE GENOMIC DNA]</scope>
    <source>
        <strain>ATCC 11170 / ATH 1.1.1 / DSM 467 / LMG 4362 / NCIMB 8255 / S1</strain>
    </source>
</reference>
<organism>
    <name type="scientific">Rhodospirillum rubrum (strain ATCC 11170 / ATH 1.1.1 / DSM 467 / LMG 4362 / NCIMB 8255 / S1)</name>
    <dbReference type="NCBI Taxonomy" id="269796"/>
    <lineage>
        <taxon>Bacteria</taxon>
        <taxon>Pseudomonadati</taxon>
        <taxon>Pseudomonadota</taxon>
        <taxon>Alphaproteobacteria</taxon>
        <taxon>Rhodospirillales</taxon>
        <taxon>Rhodospirillaceae</taxon>
        <taxon>Rhodospirillum</taxon>
    </lineage>
</organism>
<dbReference type="EMBL" id="CP000230">
    <property type="protein sequence ID" value="ABC21554.1"/>
    <property type="molecule type" value="Genomic_DNA"/>
</dbReference>
<dbReference type="RefSeq" id="WP_011388508.1">
    <property type="nucleotide sequence ID" value="NC_007643.1"/>
</dbReference>
<dbReference type="RefSeq" id="YP_425841.1">
    <property type="nucleotide sequence ID" value="NC_007643.1"/>
</dbReference>
<dbReference type="SMR" id="Q2RWE1"/>
<dbReference type="STRING" id="269796.Rru_A0750"/>
<dbReference type="EnsemblBacteria" id="ABC21554">
    <property type="protein sequence ID" value="ABC21554"/>
    <property type="gene ID" value="Rru_A0750"/>
</dbReference>
<dbReference type="KEGG" id="rru:Rru_A0750"/>
<dbReference type="PATRIC" id="fig|269796.9.peg.803"/>
<dbReference type="eggNOG" id="COG0216">
    <property type="taxonomic scope" value="Bacteria"/>
</dbReference>
<dbReference type="HOGENOM" id="CLU_036856_0_1_5"/>
<dbReference type="PhylomeDB" id="Q2RWE1"/>
<dbReference type="Proteomes" id="UP000001929">
    <property type="component" value="Chromosome"/>
</dbReference>
<dbReference type="GO" id="GO:0005737">
    <property type="term" value="C:cytoplasm"/>
    <property type="evidence" value="ECO:0007669"/>
    <property type="project" value="UniProtKB-SubCell"/>
</dbReference>
<dbReference type="GO" id="GO:0016149">
    <property type="term" value="F:translation release factor activity, codon specific"/>
    <property type="evidence" value="ECO:0007669"/>
    <property type="project" value="UniProtKB-UniRule"/>
</dbReference>
<dbReference type="FunFam" id="3.30.160.20:FF:000004">
    <property type="entry name" value="Peptide chain release factor 1"/>
    <property type="match status" value="1"/>
</dbReference>
<dbReference type="FunFam" id="3.30.70.1660:FF:000002">
    <property type="entry name" value="Peptide chain release factor 1"/>
    <property type="match status" value="1"/>
</dbReference>
<dbReference type="FunFam" id="3.30.70.1660:FF:000004">
    <property type="entry name" value="Peptide chain release factor 1"/>
    <property type="match status" value="1"/>
</dbReference>
<dbReference type="Gene3D" id="3.30.160.20">
    <property type="match status" value="1"/>
</dbReference>
<dbReference type="Gene3D" id="3.30.70.1660">
    <property type="match status" value="1"/>
</dbReference>
<dbReference type="Gene3D" id="6.10.140.1950">
    <property type="match status" value="1"/>
</dbReference>
<dbReference type="HAMAP" id="MF_00093">
    <property type="entry name" value="Rel_fac_1"/>
    <property type="match status" value="1"/>
</dbReference>
<dbReference type="InterPro" id="IPR005139">
    <property type="entry name" value="PCRF"/>
</dbReference>
<dbReference type="InterPro" id="IPR000352">
    <property type="entry name" value="Pep_chain_release_fac_I"/>
</dbReference>
<dbReference type="InterPro" id="IPR045853">
    <property type="entry name" value="Pep_chain_release_fac_I_sf"/>
</dbReference>
<dbReference type="InterPro" id="IPR050057">
    <property type="entry name" value="Prokaryotic/Mito_RF"/>
</dbReference>
<dbReference type="InterPro" id="IPR004373">
    <property type="entry name" value="RF-1"/>
</dbReference>
<dbReference type="NCBIfam" id="TIGR00019">
    <property type="entry name" value="prfA"/>
    <property type="match status" value="1"/>
</dbReference>
<dbReference type="NCBIfam" id="NF001859">
    <property type="entry name" value="PRK00591.1"/>
    <property type="match status" value="1"/>
</dbReference>
<dbReference type="PANTHER" id="PTHR43804">
    <property type="entry name" value="LD18447P"/>
    <property type="match status" value="1"/>
</dbReference>
<dbReference type="PANTHER" id="PTHR43804:SF7">
    <property type="entry name" value="LD18447P"/>
    <property type="match status" value="1"/>
</dbReference>
<dbReference type="Pfam" id="PF03462">
    <property type="entry name" value="PCRF"/>
    <property type="match status" value="1"/>
</dbReference>
<dbReference type="Pfam" id="PF00472">
    <property type="entry name" value="RF-1"/>
    <property type="match status" value="1"/>
</dbReference>
<dbReference type="SMART" id="SM00937">
    <property type="entry name" value="PCRF"/>
    <property type="match status" value="1"/>
</dbReference>
<dbReference type="SUPFAM" id="SSF75620">
    <property type="entry name" value="Release factor"/>
    <property type="match status" value="1"/>
</dbReference>
<dbReference type="PROSITE" id="PS00745">
    <property type="entry name" value="RF_PROK_I"/>
    <property type="match status" value="1"/>
</dbReference>
<protein>
    <recommendedName>
        <fullName evidence="1">Peptide chain release factor 1</fullName>
        <shortName evidence="1">RF-1</shortName>
    </recommendedName>
</protein>
<gene>
    <name evidence="1" type="primary">prfA</name>
    <name type="ordered locus">Rru_A0750</name>
</gene>